<dbReference type="EC" id="6.1.1.16" evidence="1"/>
<dbReference type="EMBL" id="AM849034">
    <property type="protein sequence ID" value="CAQ02818.1"/>
    <property type="molecule type" value="Genomic_DNA"/>
</dbReference>
<dbReference type="RefSeq" id="WP_012299986.1">
    <property type="nucleotide sequence ID" value="NZ_MZMN01000003.1"/>
</dbReference>
<dbReference type="SMR" id="B0RAX1"/>
<dbReference type="STRING" id="31964.CMS2746"/>
<dbReference type="KEGG" id="cms:CMS2746"/>
<dbReference type="eggNOG" id="COG0215">
    <property type="taxonomic scope" value="Bacteria"/>
</dbReference>
<dbReference type="HOGENOM" id="CLU_013528_0_1_11"/>
<dbReference type="OrthoDB" id="9815130at2"/>
<dbReference type="Proteomes" id="UP000001318">
    <property type="component" value="Chromosome"/>
</dbReference>
<dbReference type="GO" id="GO:0005829">
    <property type="term" value="C:cytosol"/>
    <property type="evidence" value="ECO:0007669"/>
    <property type="project" value="TreeGrafter"/>
</dbReference>
<dbReference type="GO" id="GO:0005524">
    <property type="term" value="F:ATP binding"/>
    <property type="evidence" value="ECO:0007669"/>
    <property type="project" value="UniProtKB-UniRule"/>
</dbReference>
<dbReference type="GO" id="GO:0004817">
    <property type="term" value="F:cysteine-tRNA ligase activity"/>
    <property type="evidence" value="ECO:0007669"/>
    <property type="project" value="UniProtKB-UniRule"/>
</dbReference>
<dbReference type="GO" id="GO:0008270">
    <property type="term" value="F:zinc ion binding"/>
    <property type="evidence" value="ECO:0007669"/>
    <property type="project" value="UniProtKB-UniRule"/>
</dbReference>
<dbReference type="GO" id="GO:0006423">
    <property type="term" value="P:cysteinyl-tRNA aminoacylation"/>
    <property type="evidence" value="ECO:0007669"/>
    <property type="project" value="UniProtKB-UniRule"/>
</dbReference>
<dbReference type="CDD" id="cd00672">
    <property type="entry name" value="CysRS_core"/>
    <property type="match status" value="1"/>
</dbReference>
<dbReference type="FunFam" id="3.40.50.620:FF:000068">
    <property type="entry name" value="Cysteine--tRNA ligase"/>
    <property type="match status" value="1"/>
</dbReference>
<dbReference type="Gene3D" id="1.20.120.1910">
    <property type="entry name" value="Cysteine-tRNA ligase, C-terminal anti-codon recognition domain"/>
    <property type="match status" value="1"/>
</dbReference>
<dbReference type="Gene3D" id="3.40.50.620">
    <property type="entry name" value="HUPs"/>
    <property type="match status" value="1"/>
</dbReference>
<dbReference type="HAMAP" id="MF_00041">
    <property type="entry name" value="Cys_tRNA_synth"/>
    <property type="match status" value="1"/>
</dbReference>
<dbReference type="InterPro" id="IPR015803">
    <property type="entry name" value="Cys-tRNA-ligase"/>
</dbReference>
<dbReference type="InterPro" id="IPR015273">
    <property type="entry name" value="Cys-tRNA-synt_Ia_DALR"/>
</dbReference>
<dbReference type="InterPro" id="IPR024909">
    <property type="entry name" value="Cys-tRNA/MSH_ligase"/>
</dbReference>
<dbReference type="InterPro" id="IPR056411">
    <property type="entry name" value="CysS_C"/>
</dbReference>
<dbReference type="InterPro" id="IPR014729">
    <property type="entry name" value="Rossmann-like_a/b/a_fold"/>
</dbReference>
<dbReference type="InterPro" id="IPR032678">
    <property type="entry name" value="tRNA-synt_1_cat_dom"/>
</dbReference>
<dbReference type="InterPro" id="IPR009080">
    <property type="entry name" value="tRNAsynth_Ia_anticodon-bd"/>
</dbReference>
<dbReference type="NCBIfam" id="TIGR00435">
    <property type="entry name" value="cysS"/>
    <property type="match status" value="1"/>
</dbReference>
<dbReference type="PANTHER" id="PTHR10890:SF30">
    <property type="entry name" value="CYSTEINE--TRNA LIGASE"/>
    <property type="match status" value="1"/>
</dbReference>
<dbReference type="PANTHER" id="PTHR10890">
    <property type="entry name" value="CYSTEINYL-TRNA SYNTHETASE"/>
    <property type="match status" value="1"/>
</dbReference>
<dbReference type="Pfam" id="PF23493">
    <property type="entry name" value="CysS_C"/>
    <property type="match status" value="1"/>
</dbReference>
<dbReference type="Pfam" id="PF09190">
    <property type="entry name" value="DALR_2"/>
    <property type="match status" value="1"/>
</dbReference>
<dbReference type="Pfam" id="PF01406">
    <property type="entry name" value="tRNA-synt_1e"/>
    <property type="match status" value="1"/>
</dbReference>
<dbReference type="PRINTS" id="PR00983">
    <property type="entry name" value="TRNASYNTHCYS"/>
</dbReference>
<dbReference type="SMART" id="SM00840">
    <property type="entry name" value="DALR_2"/>
    <property type="match status" value="1"/>
</dbReference>
<dbReference type="SUPFAM" id="SSF47323">
    <property type="entry name" value="Anticodon-binding domain of a subclass of class I aminoacyl-tRNA synthetases"/>
    <property type="match status" value="1"/>
</dbReference>
<dbReference type="SUPFAM" id="SSF52374">
    <property type="entry name" value="Nucleotidylyl transferase"/>
    <property type="match status" value="1"/>
</dbReference>
<name>SYC_CLASE</name>
<evidence type="ECO:0000255" key="1">
    <source>
        <dbReference type="HAMAP-Rule" id="MF_00041"/>
    </source>
</evidence>
<protein>
    <recommendedName>
        <fullName evidence="1">Cysteine--tRNA ligase</fullName>
        <ecNumber evidence="1">6.1.1.16</ecNumber>
    </recommendedName>
    <alternativeName>
        <fullName evidence="1">Cysteinyl-tRNA synthetase</fullName>
        <shortName evidence="1">CysRS</shortName>
    </alternativeName>
</protein>
<reference key="1">
    <citation type="journal article" date="2008" name="J. Bacteriol.">
        <title>Genome of the actinomycete plant pathogen Clavibacter michiganensis subsp. sepedonicus suggests recent niche adaptation.</title>
        <authorList>
            <person name="Bentley S.D."/>
            <person name="Corton C."/>
            <person name="Brown S.E."/>
            <person name="Barron A."/>
            <person name="Clark L."/>
            <person name="Doggett J."/>
            <person name="Harris B."/>
            <person name="Ormond D."/>
            <person name="Quail M.A."/>
            <person name="May G."/>
            <person name="Francis D."/>
            <person name="Knudson D."/>
            <person name="Parkhill J."/>
            <person name="Ishimaru C.A."/>
        </authorList>
    </citation>
    <scope>NUCLEOTIDE SEQUENCE [LARGE SCALE GENOMIC DNA]</scope>
    <source>
        <strain>ATCC 33113 / DSM 20744 / JCM 9667 / LMG 2889 / ICMP 2535 / C-1</strain>
    </source>
</reference>
<keyword id="KW-0030">Aminoacyl-tRNA synthetase</keyword>
<keyword id="KW-0067">ATP-binding</keyword>
<keyword id="KW-0963">Cytoplasm</keyword>
<keyword id="KW-0436">Ligase</keyword>
<keyword id="KW-0479">Metal-binding</keyword>
<keyword id="KW-0547">Nucleotide-binding</keyword>
<keyword id="KW-0648">Protein biosynthesis</keyword>
<keyword id="KW-0862">Zinc</keyword>
<comment type="catalytic activity">
    <reaction evidence="1">
        <text>tRNA(Cys) + L-cysteine + ATP = L-cysteinyl-tRNA(Cys) + AMP + diphosphate</text>
        <dbReference type="Rhea" id="RHEA:17773"/>
        <dbReference type="Rhea" id="RHEA-COMP:9661"/>
        <dbReference type="Rhea" id="RHEA-COMP:9679"/>
        <dbReference type="ChEBI" id="CHEBI:30616"/>
        <dbReference type="ChEBI" id="CHEBI:33019"/>
        <dbReference type="ChEBI" id="CHEBI:35235"/>
        <dbReference type="ChEBI" id="CHEBI:78442"/>
        <dbReference type="ChEBI" id="CHEBI:78517"/>
        <dbReference type="ChEBI" id="CHEBI:456215"/>
        <dbReference type="EC" id="6.1.1.16"/>
    </reaction>
</comment>
<comment type="cofactor">
    <cofactor evidence="1">
        <name>Zn(2+)</name>
        <dbReference type="ChEBI" id="CHEBI:29105"/>
    </cofactor>
    <text evidence="1">Binds 1 zinc ion per subunit.</text>
</comment>
<comment type="subunit">
    <text evidence="1">Monomer.</text>
</comment>
<comment type="subcellular location">
    <subcellularLocation>
        <location evidence="1">Cytoplasm</location>
    </subcellularLocation>
</comment>
<comment type="similarity">
    <text evidence="1">Belongs to the class-I aminoacyl-tRNA synthetase family.</text>
</comment>
<accession>B0RAX1</accession>
<sequence>MTLRLHDSRTQSLRDFVPLVDGRVGIYVCGPTVQSAPHIGHLRSALAYDQLRRWLAYRGLDVTLVRNVTDIDDKVIDNARRGQEAGGTEEWWALAYRVELEFSRAYAALGILPPSYEPRATASIGEMQAIIGRLVERGHAYPADDGSGDVYFDTASWPEYGELTRQRAADMEAAADADPRAKRDVRDFALWKGAKPGEPASASWPSPWGAGRPGWHIECSAMSTRYLGAEFDIHGGGLDLRFPHHENELAQSRAAGDPFARYWLHNGLVAVAGQKMSKSLGNSLFAADLLASARPVVVRYFLGSAHYRSTLEFHDGALAEAEAALDRIETFLDRSARRLAGTRFQAEPAATDGAPAAVPDEFAEAMDDDLSVPQALAVLHDAVRAGNAALDAGDLQEAASLRADVSAMVAVLGIDPLADEWRTASDQPARRALQALVEHRIAERQTAREARDFALADRIRQELAEAGITIEDSPGGSHWSIDGE</sequence>
<gene>
    <name evidence="1" type="primary">cysS</name>
    <name type="ordered locus">CMS2746</name>
</gene>
<organism>
    <name type="scientific">Clavibacter sepedonicus</name>
    <name type="common">Clavibacter michiganensis subsp. sepedonicus</name>
    <dbReference type="NCBI Taxonomy" id="31964"/>
    <lineage>
        <taxon>Bacteria</taxon>
        <taxon>Bacillati</taxon>
        <taxon>Actinomycetota</taxon>
        <taxon>Actinomycetes</taxon>
        <taxon>Micrococcales</taxon>
        <taxon>Microbacteriaceae</taxon>
        <taxon>Clavibacter</taxon>
    </lineage>
</organism>
<proteinExistence type="inferred from homology"/>
<feature type="chain" id="PRO_1000074611" description="Cysteine--tRNA ligase">
    <location>
        <begin position="1"/>
        <end position="484"/>
    </location>
</feature>
<feature type="short sequence motif" description="'HIGH' region">
    <location>
        <begin position="31"/>
        <end position="41"/>
    </location>
</feature>
<feature type="short sequence motif" description="'KMSKS' region">
    <location>
        <begin position="275"/>
        <end position="279"/>
    </location>
</feature>
<feature type="binding site" evidence="1">
    <location>
        <position position="29"/>
    </location>
    <ligand>
        <name>Zn(2+)</name>
        <dbReference type="ChEBI" id="CHEBI:29105"/>
    </ligand>
</feature>
<feature type="binding site" evidence="1">
    <location>
        <position position="219"/>
    </location>
    <ligand>
        <name>Zn(2+)</name>
        <dbReference type="ChEBI" id="CHEBI:29105"/>
    </ligand>
</feature>
<feature type="binding site" evidence="1">
    <location>
        <position position="244"/>
    </location>
    <ligand>
        <name>Zn(2+)</name>
        <dbReference type="ChEBI" id="CHEBI:29105"/>
    </ligand>
</feature>
<feature type="binding site" evidence="1">
    <location>
        <position position="248"/>
    </location>
    <ligand>
        <name>Zn(2+)</name>
        <dbReference type="ChEBI" id="CHEBI:29105"/>
    </ligand>
</feature>
<feature type="binding site" evidence="1">
    <location>
        <position position="278"/>
    </location>
    <ligand>
        <name>ATP</name>
        <dbReference type="ChEBI" id="CHEBI:30616"/>
    </ligand>
</feature>